<sequence>MSIIAINENGFLDKIKGRNPLFTCVISSIETTLSIPISGVHRDVIKYTPSADVELVFYGKSLTLKTPPIDATGSPTPATITRACVELKNIKNLHIDAGAFVKPKIPFIEIDEKPTGRIEEGKAMNNSKELYMKGYLLGKNLDAELLIVGESVPGGTTTALGVLLGLGYDAEGKVSSGSINNPHELKIKVVREGLKKAGINEKSSVFDVLNAVGDKMMPVVAGLAISFAERNKPVILAGGTQMSAVLAVIKEINKKVLDKNLIAIGTTEFVLNDKKGDLKGIVEQIGNVPVLASKFYFEKAKIEGLKNYCKGSVKEGVGAGGIAVYSIVNDLEPTKIREFIENKFYEWYKE</sequence>
<name>Y1598_METJA</name>
<feature type="chain" id="PRO_0000151051" description="UPF0284 protein MJ1598">
    <location>
        <begin position="1"/>
        <end position="350"/>
    </location>
</feature>
<feature type="strand" evidence="3">
    <location>
        <begin position="3"/>
        <end position="7"/>
    </location>
</feature>
<feature type="helix" evidence="3">
    <location>
        <begin position="11"/>
        <end position="15"/>
    </location>
</feature>
<feature type="strand" evidence="3">
    <location>
        <begin position="20"/>
        <end position="26"/>
    </location>
</feature>
<feature type="helix" evidence="3">
    <location>
        <begin position="30"/>
        <end position="33"/>
    </location>
</feature>
<feature type="strand" evidence="4">
    <location>
        <begin position="38"/>
        <end position="40"/>
    </location>
</feature>
<feature type="turn" evidence="3">
    <location>
        <begin position="42"/>
        <end position="44"/>
    </location>
</feature>
<feature type="helix" evidence="3">
    <location>
        <begin position="45"/>
        <end position="47"/>
    </location>
</feature>
<feature type="helix" evidence="3">
    <location>
        <begin position="48"/>
        <end position="58"/>
    </location>
</feature>
<feature type="strand" evidence="3">
    <location>
        <begin position="62"/>
        <end position="66"/>
    </location>
</feature>
<feature type="helix" evidence="2">
    <location>
        <begin position="71"/>
        <end position="73"/>
    </location>
</feature>
<feature type="helix" evidence="3">
    <location>
        <begin position="78"/>
        <end position="88"/>
    </location>
</feature>
<feature type="strand" evidence="3">
    <location>
        <begin position="95"/>
        <end position="97"/>
    </location>
</feature>
<feature type="strand" evidence="3">
    <location>
        <begin position="107"/>
        <end position="111"/>
    </location>
</feature>
<feature type="helix" evidence="3">
    <location>
        <begin position="118"/>
        <end position="120"/>
    </location>
</feature>
<feature type="helix" evidence="3">
    <location>
        <begin position="127"/>
        <end position="139"/>
    </location>
</feature>
<feature type="strand" evidence="3">
    <location>
        <begin position="144"/>
        <end position="151"/>
    </location>
</feature>
<feature type="helix" evidence="3">
    <location>
        <begin position="155"/>
        <end position="165"/>
    </location>
</feature>
<feature type="turn" evidence="3">
    <location>
        <begin position="171"/>
        <end position="173"/>
    </location>
</feature>
<feature type="strand" evidence="3">
    <location>
        <begin position="177"/>
        <end position="179"/>
    </location>
</feature>
<feature type="helix" evidence="3">
    <location>
        <begin position="183"/>
        <end position="196"/>
    </location>
</feature>
<feature type="helix" evidence="3">
    <location>
        <begin position="205"/>
        <end position="212"/>
    </location>
</feature>
<feature type="helix" evidence="3">
    <location>
        <begin position="216"/>
        <end position="229"/>
    </location>
</feature>
<feature type="strand" evidence="3">
    <location>
        <begin position="234"/>
        <end position="239"/>
    </location>
</feature>
<feature type="helix" evidence="3">
    <location>
        <begin position="240"/>
        <end position="257"/>
    </location>
</feature>
<feature type="strand" evidence="3">
    <location>
        <begin position="262"/>
        <end position="267"/>
    </location>
</feature>
<feature type="helix" evidence="3">
    <location>
        <begin position="268"/>
        <end position="271"/>
    </location>
</feature>
<feature type="turn" evidence="4">
    <location>
        <begin position="274"/>
        <end position="276"/>
    </location>
</feature>
<feature type="helix" evidence="3">
    <location>
        <begin position="278"/>
        <end position="285"/>
    </location>
</feature>
<feature type="strand" evidence="3">
    <location>
        <begin position="290"/>
        <end position="293"/>
    </location>
</feature>
<feature type="helix" evidence="3">
    <location>
        <begin position="297"/>
        <end position="299"/>
    </location>
</feature>
<feature type="helix" evidence="3">
    <location>
        <begin position="303"/>
        <end position="306"/>
    </location>
</feature>
<feature type="helix" evidence="3">
    <location>
        <begin position="307"/>
        <end position="310"/>
    </location>
</feature>
<feature type="helix" evidence="3">
    <location>
        <begin position="319"/>
        <end position="328"/>
    </location>
</feature>
<feature type="helix" evidence="3">
    <location>
        <begin position="334"/>
        <end position="348"/>
    </location>
</feature>
<dbReference type="EMBL" id="L77117">
    <property type="protein sequence ID" value="AAB99619.1"/>
    <property type="molecule type" value="Genomic_DNA"/>
</dbReference>
<dbReference type="PIR" id="E64499">
    <property type="entry name" value="E64499"/>
</dbReference>
<dbReference type="RefSeq" id="WP_010871123.1">
    <property type="nucleotide sequence ID" value="NC_000909.1"/>
</dbReference>
<dbReference type="PDB" id="3L0Z">
    <property type="method" value="X-ray"/>
    <property type="resolution" value="2.65 A"/>
    <property type="chains" value="A/B/C=1-350"/>
</dbReference>
<dbReference type="PDB" id="6PT8">
    <property type="method" value="X-ray"/>
    <property type="resolution" value="1.40 A"/>
    <property type="chains" value="A/B=1-350"/>
</dbReference>
<dbReference type="PDB" id="6PTF">
    <property type="method" value="X-ray"/>
    <property type="resolution" value="2.20 A"/>
    <property type="chains" value="A=1-350"/>
</dbReference>
<dbReference type="PDB" id="6PU6">
    <property type="method" value="X-ray"/>
    <property type="resolution" value="2.29 A"/>
    <property type="chains" value="A/B=1-350"/>
</dbReference>
<dbReference type="PDBsum" id="3L0Z"/>
<dbReference type="PDBsum" id="6PT8"/>
<dbReference type="PDBsum" id="6PTF"/>
<dbReference type="PDBsum" id="6PU6"/>
<dbReference type="SMR" id="Q58993"/>
<dbReference type="STRING" id="243232.MJ_1598"/>
<dbReference type="PaxDb" id="243232-MJ_1598"/>
<dbReference type="EnsemblBacteria" id="AAB99619">
    <property type="protein sequence ID" value="AAB99619"/>
    <property type="gene ID" value="MJ_1598"/>
</dbReference>
<dbReference type="GeneID" id="1452507"/>
<dbReference type="KEGG" id="mja:MJ_1598"/>
<dbReference type="eggNOG" id="arCOG04272">
    <property type="taxonomic scope" value="Archaea"/>
</dbReference>
<dbReference type="HOGENOM" id="CLU_053134_0_0_2"/>
<dbReference type="InParanoid" id="Q58993"/>
<dbReference type="OrthoDB" id="9136at2157"/>
<dbReference type="PhylomeDB" id="Q58993"/>
<dbReference type="EvolutionaryTrace" id="Q58993"/>
<dbReference type="Proteomes" id="UP000000805">
    <property type="component" value="Chromosome"/>
</dbReference>
<dbReference type="GO" id="GO:0008939">
    <property type="term" value="F:nicotinate-nucleotide-dimethylbenzimidazole phosphoribosyltransferase activity"/>
    <property type="evidence" value="ECO:0007669"/>
    <property type="project" value="InterPro"/>
</dbReference>
<dbReference type="CDD" id="cd02439">
    <property type="entry name" value="DMB-PRT_CobT"/>
    <property type="match status" value="1"/>
</dbReference>
<dbReference type="Gene3D" id="3.40.50.10210">
    <property type="match status" value="1"/>
</dbReference>
<dbReference type="HAMAP" id="MF_01086">
    <property type="entry name" value="UPF0284"/>
    <property type="match status" value="1"/>
</dbReference>
<dbReference type="InterPro" id="IPR003200">
    <property type="entry name" value="Nict_dMeBzImd_PRibTrfase"/>
</dbReference>
<dbReference type="InterPro" id="IPR002805">
    <property type="entry name" value="Nict_dMeBzImd_PRibTrfase_arc"/>
</dbReference>
<dbReference type="InterPro" id="IPR036087">
    <property type="entry name" value="Nict_dMeBzImd_PRibTrfase_sf"/>
</dbReference>
<dbReference type="NCBIfam" id="TIGR00303">
    <property type="entry name" value="nicotinate mononucleotide-dependent phosphoribosyltransferase CobT"/>
    <property type="match status" value="1"/>
</dbReference>
<dbReference type="NCBIfam" id="NF003372">
    <property type="entry name" value="PRK04447.1-5"/>
    <property type="match status" value="1"/>
</dbReference>
<dbReference type="NCBIfam" id="NF003374">
    <property type="entry name" value="PRK04447.1-7"/>
    <property type="match status" value="1"/>
</dbReference>
<dbReference type="PANTHER" id="PTHR38811">
    <property type="match status" value="1"/>
</dbReference>
<dbReference type="PANTHER" id="PTHR38811:SF1">
    <property type="entry name" value="UPF0284 PROTEIN SLL1500"/>
    <property type="match status" value="1"/>
</dbReference>
<dbReference type="Pfam" id="PF02277">
    <property type="entry name" value="DBI_PRT"/>
    <property type="match status" value="1"/>
</dbReference>
<dbReference type="SUPFAM" id="SSF52733">
    <property type="entry name" value="Nicotinate mononucleotide:5,6-dimethylbenzimidazole phosphoribosyltransferase (CobT)"/>
    <property type="match status" value="1"/>
</dbReference>
<comment type="similarity">
    <text evidence="1">Belongs to the UPF0284 family.</text>
</comment>
<evidence type="ECO:0000255" key="1">
    <source>
        <dbReference type="HAMAP-Rule" id="MF_01086"/>
    </source>
</evidence>
<evidence type="ECO:0007829" key="2">
    <source>
        <dbReference type="PDB" id="3L0Z"/>
    </source>
</evidence>
<evidence type="ECO:0007829" key="3">
    <source>
        <dbReference type="PDB" id="6PT8"/>
    </source>
</evidence>
<evidence type="ECO:0007829" key="4">
    <source>
        <dbReference type="PDB" id="6PTF"/>
    </source>
</evidence>
<reference key="1">
    <citation type="journal article" date="1996" name="Science">
        <title>Complete genome sequence of the methanogenic archaeon, Methanococcus jannaschii.</title>
        <authorList>
            <person name="Bult C.J."/>
            <person name="White O."/>
            <person name="Olsen G.J."/>
            <person name="Zhou L."/>
            <person name="Fleischmann R.D."/>
            <person name="Sutton G.G."/>
            <person name="Blake J.A."/>
            <person name="FitzGerald L.M."/>
            <person name="Clayton R.A."/>
            <person name="Gocayne J.D."/>
            <person name="Kerlavage A.R."/>
            <person name="Dougherty B.A."/>
            <person name="Tomb J.-F."/>
            <person name="Adams M.D."/>
            <person name="Reich C.I."/>
            <person name="Overbeek R."/>
            <person name="Kirkness E.F."/>
            <person name="Weinstock K.G."/>
            <person name="Merrick J.M."/>
            <person name="Glodek A."/>
            <person name="Scott J.L."/>
            <person name="Geoghagen N.S.M."/>
            <person name="Weidman J.F."/>
            <person name="Fuhrmann J.L."/>
            <person name="Nguyen D."/>
            <person name="Utterback T.R."/>
            <person name="Kelley J.M."/>
            <person name="Peterson J.D."/>
            <person name="Sadow P.W."/>
            <person name="Hanna M.C."/>
            <person name="Cotton M.D."/>
            <person name="Roberts K.M."/>
            <person name="Hurst M.A."/>
            <person name="Kaine B.P."/>
            <person name="Borodovsky M."/>
            <person name="Klenk H.-P."/>
            <person name="Fraser C.M."/>
            <person name="Smith H.O."/>
            <person name="Woese C.R."/>
            <person name="Venter J.C."/>
        </authorList>
    </citation>
    <scope>NUCLEOTIDE SEQUENCE [LARGE SCALE GENOMIC DNA]</scope>
    <source>
        <strain>ATCC 43067 / DSM 2661 / JAL-1 / JCM 10045 / NBRC 100440</strain>
    </source>
</reference>
<accession>Q58993</accession>
<protein>
    <recommendedName>
        <fullName evidence="1">UPF0284 protein MJ1598</fullName>
    </recommendedName>
</protein>
<organism>
    <name type="scientific">Methanocaldococcus jannaschii (strain ATCC 43067 / DSM 2661 / JAL-1 / JCM 10045 / NBRC 100440)</name>
    <name type="common">Methanococcus jannaschii</name>
    <dbReference type="NCBI Taxonomy" id="243232"/>
    <lineage>
        <taxon>Archaea</taxon>
        <taxon>Methanobacteriati</taxon>
        <taxon>Methanobacteriota</taxon>
        <taxon>Methanomada group</taxon>
        <taxon>Methanococci</taxon>
        <taxon>Methanococcales</taxon>
        <taxon>Methanocaldococcaceae</taxon>
        <taxon>Methanocaldococcus</taxon>
    </lineage>
</organism>
<gene>
    <name type="ordered locus">MJ1598</name>
</gene>
<proteinExistence type="evidence at protein level"/>
<keyword id="KW-0002">3D-structure</keyword>
<keyword id="KW-1185">Reference proteome</keyword>